<name>BRNQL_STAAS</name>
<evidence type="ECO:0000250" key="1"/>
<evidence type="ECO:0000255" key="2"/>
<evidence type="ECO:0000305" key="3"/>
<protein>
    <recommendedName>
        <fullName>Putative branched-chain amino acid carrier protein SAS1350</fullName>
    </recommendedName>
</protein>
<feature type="chain" id="PRO_0000294014" description="Putative branched-chain amino acid carrier protein SAS1350">
    <location>
        <begin position="1"/>
        <end position="447"/>
    </location>
</feature>
<feature type="transmembrane region" description="Helical" evidence="2">
    <location>
        <begin position="6"/>
        <end position="26"/>
    </location>
</feature>
<feature type="transmembrane region" description="Helical" evidence="2">
    <location>
        <begin position="40"/>
        <end position="60"/>
    </location>
</feature>
<feature type="transmembrane region" description="Helical" evidence="2">
    <location>
        <begin position="74"/>
        <end position="94"/>
    </location>
</feature>
<feature type="transmembrane region" description="Helical" evidence="2">
    <location>
        <begin position="114"/>
        <end position="134"/>
    </location>
</feature>
<feature type="transmembrane region" description="Helical" evidence="2">
    <location>
        <begin position="143"/>
        <end position="163"/>
    </location>
</feature>
<feature type="transmembrane region" description="Helical" evidence="2">
    <location>
        <begin position="193"/>
        <end position="213"/>
    </location>
</feature>
<feature type="transmembrane region" description="Helical" evidence="2">
    <location>
        <begin position="229"/>
        <end position="249"/>
    </location>
</feature>
<feature type="transmembrane region" description="Helical" evidence="2">
    <location>
        <begin position="290"/>
        <end position="310"/>
    </location>
</feature>
<feature type="transmembrane region" description="Helical" evidence="2">
    <location>
        <begin position="326"/>
        <end position="346"/>
    </location>
</feature>
<feature type="transmembrane region" description="Helical" evidence="2">
    <location>
        <begin position="350"/>
        <end position="370"/>
    </location>
</feature>
<feature type="transmembrane region" description="Helical" evidence="2">
    <location>
        <begin position="382"/>
        <end position="402"/>
    </location>
</feature>
<feature type="transmembrane region" description="Helical" evidence="2">
    <location>
        <begin position="417"/>
        <end position="437"/>
    </location>
</feature>
<sequence>MNKNTWVIGFTLFAMFFGAGNLIFPPNLGLDSGQFFWPAILAFVLTGIGLPLLGVIVGALDKEGYIGALNKISPKFSILFLIIIYLTIGPLFAIPRTASTSFEMTITPIIHSNSSIALFIFTIIYFIVVLYICLNPSKLIDRIGSLLTPLLLITILAMIIKGYLDFSGNSAGKGNEALYHSNFSSFAEGFTQGYLTMDAIAAIAFSMIVVNAVKLTGITKTNQIFKQTLTAGLIAAVALIFIYISLGYIGNHMPVSDMTLDQLKSKDRNIGTYLLTTMASTGFGSFGKYLLGIIVALACLTTACGLIVAVSEYFHRIVPKVSYKAFVLVFILMSFIIANQGLNAVISMSIPVLSIVYPVAITVVLLILIAKFIPTKRISQQIPVIIVFILSIFSVISKLGWLKINFIESLPLRAYSLEWFPVAIIATILGYLVGIFVKQDPIKYQQE</sequence>
<organism>
    <name type="scientific">Staphylococcus aureus (strain MSSA476)</name>
    <dbReference type="NCBI Taxonomy" id="282459"/>
    <lineage>
        <taxon>Bacteria</taxon>
        <taxon>Bacillati</taxon>
        <taxon>Bacillota</taxon>
        <taxon>Bacilli</taxon>
        <taxon>Bacillales</taxon>
        <taxon>Staphylococcaceae</taxon>
        <taxon>Staphylococcus</taxon>
    </lineage>
</organism>
<keyword id="KW-0029">Amino-acid transport</keyword>
<keyword id="KW-1003">Cell membrane</keyword>
<keyword id="KW-0472">Membrane</keyword>
<keyword id="KW-0812">Transmembrane</keyword>
<keyword id="KW-1133">Transmembrane helix</keyword>
<keyword id="KW-0813">Transport</keyword>
<accession>Q6G9F4</accession>
<proteinExistence type="inferred from homology"/>
<gene>
    <name type="ordered locus">SAS1350</name>
</gene>
<reference key="1">
    <citation type="journal article" date="2004" name="Proc. Natl. Acad. Sci. U.S.A.">
        <title>Complete genomes of two clinical Staphylococcus aureus strains: evidence for the rapid evolution of virulence and drug resistance.</title>
        <authorList>
            <person name="Holden M.T.G."/>
            <person name="Feil E.J."/>
            <person name="Lindsay J.A."/>
            <person name="Peacock S.J."/>
            <person name="Day N.P.J."/>
            <person name="Enright M.C."/>
            <person name="Foster T.J."/>
            <person name="Moore C.E."/>
            <person name="Hurst L."/>
            <person name="Atkin R."/>
            <person name="Barron A."/>
            <person name="Bason N."/>
            <person name="Bentley S.D."/>
            <person name="Chillingworth C."/>
            <person name="Chillingworth T."/>
            <person name="Churcher C."/>
            <person name="Clark L."/>
            <person name="Corton C."/>
            <person name="Cronin A."/>
            <person name="Doggett J."/>
            <person name="Dowd L."/>
            <person name="Feltwell T."/>
            <person name="Hance Z."/>
            <person name="Harris B."/>
            <person name="Hauser H."/>
            <person name="Holroyd S."/>
            <person name="Jagels K."/>
            <person name="James K.D."/>
            <person name="Lennard N."/>
            <person name="Line A."/>
            <person name="Mayes R."/>
            <person name="Moule S."/>
            <person name="Mungall K."/>
            <person name="Ormond D."/>
            <person name="Quail M.A."/>
            <person name="Rabbinowitsch E."/>
            <person name="Rutherford K.M."/>
            <person name="Sanders M."/>
            <person name="Sharp S."/>
            <person name="Simmonds M."/>
            <person name="Stevens K."/>
            <person name="Whitehead S."/>
            <person name="Barrell B.G."/>
            <person name="Spratt B.G."/>
            <person name="Parkhill J."/>
        </authorList>
    </citation>
    <scope>NUCLEOTIDE SEQUENCE [LARGE SCALE GENOMIC DNA]</scope>
    <source>
        <strain>MSSA476</strain>
    </source>
</reference>
<dbReference type="EMBL" id="BX571857">
    <property type="protein sequence ID" value="CAG43125.1"/>
    <property type="molecule type" value="Genomic_DNA"/>
</dbReference>
<dbReference type="KEGG" id="sas:SAS1350"/>
<dbReference type="HOGENOM" id="CLU_036807_0_1_9"/>
<dbReference type="GO" id="GO:0005886">
    <property type="term" value="C:plasma membrane"/>
    <property type="evidence" value="ECO:0007669"/>
    <property type="project" value="UniProtKB-SubCell"/>
</dbReference>
<dbReference type="GO" id="GO:0015188">
    <property type="term" value="F:L-isoleucine transmembrane transporter activity"/>
    <property type="evidence" value="ECO:0007669"/>
    <property type="project" value="TreeGrafter"/>
</dbReference>
<dbReference type="GO" id="GO:0015190">
    <property type="term" value="F:L-leucine transmembrane transporter activity"/>
    <property type="evidence" value="ECO:0007669"/>
    <property type="project" value="TreeGrafter"/>
</dbReference>
<dbReference type="GO" id="GO:0005304">
    <property type="term" value="F:L-valine transmembrane transporter activity"/>
    <property type="evidence" value="ECO:0007669"/>
    <property type="project" value="TreeGrafter"/>
</dbReference>
<dbReference type="GO" id="GO:0015818">
    <property type="term" value="P:isoleucine transport"/>
    <property type="evidence" value="ECO:0007669"/>
    <property type="project" value="TreeGrafter"/>
</dbReference>
<dbReference type="GO" id="GO:0015820">
    <property type="term" value="P:L-leucine transport"/>
    <property type="evidence" value="ECO:0007669"/>
    <property type="project" value="TreeGrafter"/>
</dbReference>
<dbReference type="FunFam" id="1.20.1740.10:FF:000068">
    <property type="entry name" value="Branched-chain amino acid transport system carrier protein"/>
    <property type="match status" value="1"/>
</dbReference>
<dbReference type="Gene3D" id="1.20.1740.10">
    <property type="entry name" value="Amino acid/polyamine transporter I"/>
    <property type="match status" value="1"/>
</dbReference>
<dbReference type="InterPro" id="IPR004685">
    <property type="entry name" value="Brnchd-chn_aa_trnsp_Livcs"/>
</dbReference>
<dbReference type="NCBIfam" id="TIGR00796">
    <property type="entry name" value="livcs"/>
    <property type="match status" value="1"/>
</dbReference>
<dbReference type="PANTHER" id="PTHR30588:SF7">
    <property type="entry name" value="BRANCHED-CHAIN AMINO ACID CARRIER PROTEIN SAOUHSC_01411-RELATED"/>
    <property type="match status" value="1"/>
</dbReference>
<dbReference type="PANTHER" id="PTHR30588">
    <property type="entry name" value="BRANCHED-CHAIN AMINO ACID TRANSPORT SYSTEM 2 CARRIER PROTEIN"/>
    <property type="match status" value="1"/>
</dbReference>
<dbReference type="Pfam" id="PF05525">
    <property type="entry name" value="Branch_AA_trans"/>
    <property type="match status" value="1"/>
</dbReference>
<comment type="function">
    <text evidence="1 3">Component of the transport system for branched-chain amino acids (leucine, isoleucine and valine), which is coupled to a proton motive force (Potential). Contributes to NaCl tolerance (By similarity).</text>
</comment>
<comment type="subcellular location">
    <subcellularLocation>
        <location evidence="3">Cell membrane</location>
        <topology evidence="3">Multi-pass membrane protein</topology>
    </subcellularLocation>
</comment>
<comment type="similarity">
    <text evidence="3">Belongs to the branched chain amino acid transporter family.</text>
</comment>